<dbReference type="EMBL" id="U00096">
    <property type="protein sequence ID" value="AGW80435.1"/>
    <property type="molecule type" value="Genomic_DNA"/>
</dbReference>
<dbReference type="RefSeq" id="YP_008592385.1">
    <property type="nucleotide sequence ID" value="NC_000913.3"/>
</dbReference>
<dbReference type="EnsemblBacteria" id="AGW80435">
    <property type="protein sequence ID" value="AGW80435"/>
    <property type="gene ID" value="b4706"/>
</dbReference>
<dbReference type="GeneID" id="14678510"/>
<dbReference type="KEGG" id="eco:b4706"/>
<dbReference type="InParanoid" id="U3PVA8"/>
<dbReference type="BioCyc" id="EcoCyc:MONOMER0-4224"/>
<dbReference type="PRO" id="PR:U3PVA8"/>
<dbReference type="Proteomes" id="UP000000625">
    <property type="component" value="Chromosome"/>
</dbReference>
<evidence type="ECO:0000269" key="1">
    <source>
    </source>
</evidence>
<evidence type="ECO:0000305" key="2"/>
<evidence type="ECO:0000305" key="3">
    <source>
    </source>
</evidence>
<comment type="function">
    <text evidence="1">Possible increased expression of this protein (due to mutations upstream of the start codon) is proposed to be responsible for resistance to 3-hydroxypropionic acid (3-HP).</text>
</comment>
<comment type="miscellaneous">
    <text evidence="3">Mutagenesis of the start codon from ATG to TTG, which should decrease protein expression, results in loss of 3-HP resistance.</text>
</comment>
<comment type="caution">
    <text evidence="2">Encoded by the 21 C-terminal amino acids of the HcaR transcriptional activator, it is suggested to be produced by an independent promoter within the hcaR gene. However the peptide's existence has not been proven, nor has mutagenesis of HcaR itself rather than overexpression of IroK been ruled out as the cause of 3-HP resistance.</text>
</comment>
<accession>U3PVA8</accession>
<keyword id="KW-1185">Reference proteome</keyword>
<name>IROK_ECOLI</name>
<gene>
    <name type="primary">iroK</name>
    <name type="ordered locus">b4706</name>
</gene>
<feature type="chain" id="PRO_0000429438" description="Protein IroK">
    <location>
        <begin position="1"/>
        <end position="21"/>
    </location>
</feature>
<protein>
    <recommendedName>
        <fullName>Protein IroK</fullName>
    </recommendedName>
    <alternativeName>
        <fullName>3-hydroxypropionic acid resistance peptide</fullName>
    </alternativeName>
</protein>
<reference key="1">
    <citation type="journal article" date="1997" name="Science">
        <title>The complete genome sequence of Escherichia coli K-12.</title>
        <authorList>
            <person name="Blattner F.R."/>
            <person name="Plunkett G. III"/>
            <person name="Bloch C.A."/>
            <person name="Perna N.T."/>
            <person name="Burland V."/>
            <person name="Riley M."/>
            <person name="Collado-Vides J."/>
            <person name="Glasner J.D."/>
            <person name="Rode C.K."/>
            <person name="Mayhew G.F."/>
            <person name="Gregor J."/>
            <person name="Davis N.W."/>
            <person name="Kirkpatrick H.A."/>
            <person name="Goeden M.A."/>
            <person name="Rose D.J."/>
            <person name="Mau B."/>
            <person name="Shao Y."/>
        </authorList>
    </citation>
    <scope>NUCLEOTIDE SEQUENCE [LARGE SCALE GENOMIC DNA]</scope>
    <source>
        <strain>K12 / MG1655 / ATCC 47076</strain>
    </source>
</reference>
<reference key="2">
    <citation type="journal article" date="2012" name="Biotechnol. Bioeng.">
        <title>Identification of a 21 amino acid peptide conferring 3-hydroxypropionic acid stress-tolerance to Escherichia coli.</title>
        <authorList>
            <person name="Warnecke T.E."/>
            <person name="Lynch M.D."/>
            <person name="Lipscomb M.L."/>
            <person name="Gill R.T."/>
        </authorList>
    </citation>
    <scope>IDENTIFICATION</scope>
    <scope>FUNCTION</scope>
    <source>
        <strain>K12 / MG1655 / ATCC 29425</strain>
    </source>
</reference>
<proteinExistence type="predicted"/>
<sequence length="21" mass="2330">MKPALRDFIAIVQERLASVTA</sequence>
<organism>
    <name type="scientific">Escherichia coli (strain K12)</name>
    <dbReference type="NCBI Taxonomy" id="83333"/>
    <lineage>
        <taxon>Bacteria</taxon>
        <taxon>Pseudomonadati</taxon>
        <taxon>Pseudomonadota</taxon>
        <taxon>Gammaproteobacteria</taxon>
        <taxon>Enterobacterales</taxon>
        <taxon>Enterobacteriaceae</taxon>
        <taxon>Escherichia</taxon>
    </lineage>
</organism>